<keyword id="KW-0378">Hydrolase</keyword>
<keyword id="KW-0479">Metal-binding</keyword>
<keyword id="KW-0482">Metalloprotease</keyword>
<keyword id="KW-0645">Protease</keyword>
<keyword id="KW-0862">Zinc</keyword>
<feature type="chain" id="PRO_1000057165" description="UPF0758 protein YpsIP31758_0061">
    <location>
        <begin position="1"/>
        <end position="222"/>
    </location>
</feature>
<feature type="domain" description="MPN" evidence="2">
    <location>
        <begin position="100"/>
        <end position="222"/>
    </location>
</feature>
<feature type="short sequence motif" description="JAMM motif" evidence="2">
    <location>
        <begin position="171"/>
        <end position="184"/>
    </location>
</feature>
<feature type="binding site" evidence="2">
    <location>
        <position position="171"/>
    </location>
    <ligand>
        <name>Zn(2+)</name>
        <dbReference type="ChEBI" id="CHEBI:29105"/>
        <note>catalytic</note>
    </ligand>
</feature>
<feature type="binding site" evidence="2">
    <location>
        <position position="173"/>
    </location>
    <ligand>
        <name>Zn(2+)</name>
        <dbReference type="ChEBI" id="CHEBI:29105"/>
        <note>catalytic</note>
    </ligand>
</feature>
<feature type="binding site" evidence="2">
    <location>
        <position position="184"/>
    </location>
    <ligand>
        <name>Zn(2+)</name>
        <dbReference type="ChEBI" id="CHEBI:29105"/>
        <note>catalytic</note>
    </ligand>
</feature>
<evidence type="ECO:0000255" key="1">
    <source>
        <dbReference type="HAMAP-Rule" id="MF_00018"/>
    </source>
</evidence>
<evidence type="ECO:0000255" key="2">
    <source>
        <dbReference type="PROSITE-ProRule" id="PRU01182"/>
    </source>
</evidence>
<dbReference type="EMBL" id="CP000720">
    <property type="protein sequence ID" value="ABS47452.1"/>
    <property type="molecule type" value="Genomic_DNA"/>
</dbReference>
<dbReference type="SMR" id="A7FCT4"/>
<dbReference type="KEGG" id="ypi:YpsIP31758_0061"/>
<dbReference type="HOGENOM" id="CLU_073529_0_1_6"/>
<dbReference type="Proteomes" id="UP000002412">
    <property type="component" value="Chromosome"/>
</dbReference>
<dbReference type="GO" id="GO:0046872">
    <property type="term" value="F:metal ion binding"/>
    <property type="evidence" value="ECO:0007669"/>
    <property type="project" value="UniProtKB-KW"/>
</dbReference>
<dbReference type="GO" id="GO:0008237">
    <property type="term" value="F:metallopeptidase activity"/>
    <property type="evidence" value="ECO:0007669"/>
    <property type="project" value="UniProtKB-KW"/>
</dbReference>
<dbReference type="GO" id="GO:0006508">
    <property type="term" value="P:proteolysis"/>
    <property type="evidence" value="ECO:0007669"/>
    <property type="project" value="UniProtKB-KW"/>
</dbReference>
<dbReference type="CDD" id="cd08071">
    <property type="entry name" value="MPN_DUF2466"/>
    <property type="match status" value="1"/>
</dbReference>
<dbReference type="Gene3D" id="3.40.140.10">
    <property type="entry name" value="Cytidine Deaminase, domain 2"/>
    <property type="match status" value="1"/>
</dbReference>
<dbReference type="HAMAP" id="MF_00018">
    <property type="entry name" value="UPF0758_YicR"/>
    <property type="match status" value="1"/>
</dbReference>
<dbReference type="InterPro" id="IPR037518">
    <property type="entry name" value="MPN"/>
</dbReference>
<dbReference type="InterPro" id="IPR025657">
    <property type="entry name" value="RadC_JAB"/>
</dbReference>
<dbReference type="InterPro" id="IPR010994">
    <property type="entry name" value="RuvA_2-like"/>
</dbReference>
<dbReference type="InterPro" id="IPR001405">
    <property type="entry name" value="UPF0758"/>
</dbReference>
<dbReference type="InterPro" id="IPR020891">
    <property type="entry name" value="UPF0758_CS"/>
</dbReference>
<dbReference type="InterPro" id="IPR046778">
    <property type="entry name" value="UPF0758_N"/>
</dbReference>
<dbReference type="InterPro" id="IPR022820">
    <property type="entry name" value="UPF0758_YicR"/>
</dbReference>
<dbReference type="NCBIfam" id="NF000642">
    <property type="entry name" value="PRK00024.1"/>
    <property type="match status" value="1"/>
</dbReference>
<dbReference type="NCBIfam" id="TIGR00608">
    <property type="entry name" value="radc"/>
    <property type="match status" value="1"/>
</dbReference>
<dbReference type="PANTHER" id="PTHR30471">
    <property type="entry name" value="DNA REPAIR PROTEIN RADC"/>
    <property type="match status" value="1"/>
</dbReference>
<dbReference type="PANTHER" id="PTHR30471:SF3">
    <property type="entry name" value="UPF0758 PROTEIN YEES-RELATED"/>
    <property type="match status" value="1"/>
</dbReference>
<dbReference type="Pfam" id="PF04002">
    <property type="entry name" value="RadC"/>
    <property type="match status" value="1"/>
</dbReference>
<dbReference type="Pfam" id="PF20582">
    <property type="entry name" value="UPF0758_N"/>
    <property type="match status" value="1"/>
</dbReference>
<dbReference type="SUPFAM" id="SSF47781">
    <property type="entry name" value="RuvA domain 2-like"/>
    <property type="match status" value="1"/>
</dbReference>
<dbReference type="PROSITE" id="PS50249">
    <property type="entry name" value="MPN"/>
    <property type="match status" value="1"/>
</dbReference>
<dbReference type="PROSITE" id="PS01302">
    <property type="entry name" value="UPF0758"/>
    <property type="match status" value="1"/>
</dbReference>
<name>Y061_YERP3</name>
<proteinExistence type="inferred from homology"/>
<sequence length="222" mass="24814">MDEWYGQVAPREKLLKYGAAVLTDAELLAIFLRTGIPGMHVMKMAEYLIETFGSLHGLISADYQTLCAHKGIGASKYSQIQAIGELACRCFSSHLMRESVLLNPGITQKFLQNILSHREREIFLVVFLDNQHRVIRHEEMFTGTISSVEVHPREIVREALKVNAAALILAHNHPSGKAEPSQADRLITTQVIKACSLLDIRVLDHLVVGRGECVSFAERGWL</sequence>
<accession>A7FCT4</accession>
<comment type="similarity">
    <text evidence="1">Belongs to the UPF0758 family. YicR subfamily.</text>
</comment>
<gene>
    <name type="ordered locus">YpsIP31758_0061</name>
</gene>
<reference key="1">
    <citation type="journal article" date="2007" name="PLoS Genet.">
        <title>The complete genome sequence of Yersinia pseudotuberculosis IP31758, the causative agent of Far East scarlet-like fever.</title>
        <authorList>
            <person name="Eppinger M."/>
            <person name="Rosovitz M.J."/>
            <person name="Fricke W.F."/>
            <person name="Rasko D.A."/>
            <person name="Kokorina G."/>
            <person name="Fayolle C."/>
            <person name="Lindler L.E."/>
            <person name="Carniel E."/>
            <person name="Ravel J."/>
        </authorList>
    </citation>
    <scope>NUCLEOTIDE SEQUENCE [LARGE SCALE GENOMIC DNA]</scope>
    <source>
        <strain>IP 31758</strain>
    </source>
</reference>
<organism>
    <name type="scientific">Yersinia pseudotuberculosis serotype O:1b (strain IP 31758)</name>
    <dbReference type="NCBI Taxonomy" id="349747"/>
    <lineage>
        <taxon>Bacteria</taxon>
        <taxon>Pseudomonadati</taxon>
        <taxon>Pseudomonadota</taxon>
        <taxon>Gammaproteobacteria</taxon>
        <taxon>Enterobacterales</taxon>
        <taxon>Yersiniaceae</taxon>
        <taxon>Yersinia</taxon>
    </lineage>
</organism>
<protein>
    <recommendedName>
        <fullName evidence="1">UPF0758 protein YpsIP31758_0061</fullName>
    </recommendedName>
</protein>